<gene>
    <name type="ordered locus">cgR_1639</name>
</gene>
<sequence>MIQSTGVTHTDKSAQENPVKYRDNFTPVIITGMSGAGLSTAARVLEDLGWYVAHNIPPQIILELIDMCAREDSPVDKVAVVCDVRSREFRGSLTQVVSELRDKQLDPTVLFLEARDEVLIKRFDNVRRTHPLQGSQTLQVGIERERTVLSPVKEDASVVIDTSDLSVHDLRRAIESSFRTIATRTQHVTIESFGFKHGSPRDADFVVDVRFLPNPFWVPELRPFRGVDKPVSDYVLSQKGAEEFLNNFVDMLKDMLPGYRHEGKNFITIGVGCTGGHHRSVAVSEELAKRIADQTTLDVSVVHRDINRH</sequence>
<comment type="function">
    <text evidence="1">Displays ATPase and GTPase activities.</text>
</comment>
<comment type="similarity">
    <text evidence="1">Belongs to the RapZ-like family.</text>
</comment>
<protein>
    <recommendedName>
        <fullName evidence="1">Nucleotide-binding protein cgR_1639</fullName>
    </recommendedName>
</protein>
<organism>
    <name type="scientific">Corynebacterium glutamicum (strain R)</name>
    <dbReference type="NCBI Taxonomy" id="340322"/>
    <lineage>
        <taxon>Bacteria</taxon>
        <taxon>Bacillati</taxon>
        <taxon>Actinomycetota</taxon>
        <taxon>Actinomycetes</taxon>
        <taxon>Mycobacteriales</taxon>
        <taxon>Corynebacteriaceae</taxon>
        <taxon>Corynebacterium</taxon>
    </lineage>
</organism>
<feature type="chain" id="PRO_0000383231" description="Nucleotide-binding protein cgR_1639">
    <location>
        <begin position="1"/>
        <end position="309"/>
    </location>
</feature>
<feature type="binding site" evidence="1">
    <location>
        <begin position="32"/>
        <end position="39"/>
    </location>
    <ligand>
        <name>ATP</name>
        <dbReference type="ChEBI" id="CHEBI:30616"/>
    </ligand>
</feature>
<feature type="binding site" evidence="1">
    <location>
        <begin position="83"/>
        <end position="86"/>
    </location>
    <ligand>
        <name>GTP</name>
        <dbReference type="ChEBI" id="CHEBI:37565"/>
    </ligand>
</feature>
<name>Y1639_CORGB</name>
<keyword id="KW-0067">ATP-binding</keyword>
<keyword id="KW-0342">GTP-binding</keyword>
<keyword id="KW-0547">Nucleotide-binding</keyword>
<dbReference type="EMBL" id="AP009044">
    <property type="protein sequence ID" value="BAF54631.1"/>
    <property type="molecule type" value="Genomic_DNA"/>
</dbReference>
<dbReference type="RefSeq" id="WP_003856023.1">
    <property type="nucleotide sequence ID" value="NC_009342.1"/>
</dbReference>
<dbReference type="SMR" id="A4QEG5"/>
<dbReference type="GeneID" id="1019559"/>
<dbReference type="KEGG" id="cgt:cgR_1639"/>
<dbReference type="HOGENOM" id="CLU_059558_0_0_11"/>
<dbReference type="PhylomeDB" id="A4QEG5"/>
<dbReference type="Proteomes" id="UP000006698">
    <property type="component" value="Chromosome"/>
</dbReference>
<dbReference type="GO" id="GO:0005524">
    <property type="term" value="F:ATP binding"/>
    <property type="evidence" value="ECO:0007669"/>
    <property type="project" value="UniProtKB-UniRule"/>
</dbReference>
<dbReference type="GO" id="GO:0005525">
    <property type="term" value="F:GTP binding"/>
    <property type="evidence" value="ECO:0007669"/>
    <property type="project" value="UniProtKB-UniRule"/>
</dbReference>
<dbReference type="HAMAP" id="MF_00636">
    <property type="entry name" value="RapZ_like"/>
    <property type="match status" value="1"/>
</dbReference>
<dbReference type="InterPro" id="IPR027417">
    <property type="entry name" value="P-loop_NTPase"/>
</dbReference>
<dbReference type="InterPro" id="IPR005337">
    <property type="entry name" value="RapZ-like"/>
</dbReference>
<dbReference type="InterPro" id="IPR053930">
    <property type="entry name" value="RapZ-like_N"/>
</dbReference>
<dbReference type="InterPro" id="IPR053931">
    <property type="entry name" value="RapZ_C"/>
</dbReference>
<dbReference type="NCBIfam" id="NF003828">
    <property type="entry name" value="PRK05416.1"/>
    <property type="match status" value="1"/>
</dbReference>
<dbReference type="PANTHER" id="PTHR30448">
    <property type="entry name" value="RNASE ADAPTER PROTEIN RAPZ"/>
    <property type="match status" value="1"/>
</dbReference>
<dbReference type="PANTHER" id="PTHR30448:SF0">
    <property type="entry name" value="RNASE ADAPTER PROTEIN RAPZ"/>
    <property type="match status" value="1"/>
</dbReference>
<dbReference type="Pfam" id="PF22740">
    <property type="entry name" value="PapZ_C"/>
    <property type="match status" value="1"/>
</dbReference>
<dbReference type="Pfam" id="PF03668">
    <property type="entry name" value="RapZ-like_N"/>
    <property type="match status" value="1"/>
</dbReference>
<dbReference type="PIRSF" id="PIRSF005052">
    <property type="entry name" value="P-loopkin"/>
    <property type="match status" value="1"/>
</dbReference>
<dbReference type="SUPFAM" id="SSF52540">
    <property type="entry name" value="P-loop containing nucleoside triphosphate hydrolases"/>
    <property type="match status" value="1"/>
</dbReference>
<reference key="1">
    <citation type="journal article" date="2007" name="Microbiology">
        <title>Comparative analysis of the Corynebacterium glutamicum group and complete genome sequence of strain R.</title>
        <authorList>
            <person name="Yukawa H."/>
            <person name="Omumasaba C.A."/>
            <person name="Nonaka H."/>
            <person name="Kos P."/>
            <person name="Okai N."/>
            <person name="Suzuki N."/>
            <person name="Suda M."/>
            <person name="Tsuge Y."/>
            <person name="Watanabe J."/>
            <person name="Ikeda Y."/>
            <person name="Vertes A.A."/>
            <person name="Inui M."/>
        </authorList>
    </citation>
    <scope>NUCLEOTIDE SEQUENCE [LARGE SCALE GENOMIC DNA]</scope>
    <source>
        <strain>R</strain>
    </source>
</reference>
<proteinExistence type="inferred from homology"/>
<accession>A4QEG5</accession>
<evidence type="ECO:0000255" key="1">
    <source>
        <dbReference type="HAMAP-Rule" id="MF_00636"/>
    </source>
</evidence>